<dbReference type="EC" id="3.4.21.88" evidence="1"/>
<dbReference type="EMBL" id="AE016795">
    <property type="protein sequence ID" value="AAO09637.1"/>
    <property type="molecule type" value="Genomic_DNA"/>
</dbReference>
<dbReference type="RefSeq" id="WP_011079176.1">
    <property type="nucleotide sequence ID" value="NC_004459.3"/>
</dbReference>
<dbReference type="SMR" id="Q8DD47"/>
<dbReference type="MEROPS" id="S24.001"/>
<dbReference type="GeneID" id="93895440"/>
<dbReference type="KEGG" id="vvu:VV1_1166"/>
<dbReference type="HOGENOM" id="CLU_066192_45_3_6"/>
<dbReference type="Proteomes" id="UP000002275">
    <property type="component" value="Chromosome 1"/>
</dbReference>
<dbReference type="GO" id="GO:0003677">
    <property type="term" value="F:DNA binding"/>
    <property type="evidence" value="ECO:0007669"/>
    <property type="project" value="UniProtKB-UniRule"/>
</dbReference>
<dbReference type="GO" id="GO:0004252">
    <property type="term" value="F:serine-type endopeptidase activity"/>
    <property type="evidence" value="ECO:0007669"/>
    <property type="project" value="UniProtKB-UniRule"/>
</dbReference>
<dbReference type="GO" id="GO:0006281">
    <property type="term" value="P:DNA repair"/>
    <property type="evidence" value="ECO:0007669"/>
    <property type="project" value="UniProtKB-UniRule"/>
</dbReference>
<dbReference type="GO" id="GO:0006260">
    <property type="term" value="P:DNA replication"/>
    <property type="evidence" value="ECO:0007669"/>
    <property type="project" value="UniProtKB-UniRule"/>
</dbReference>
<dbReference type="GO" id="GO:0045892">
    <property type="term" value="P:negative regulation of DNA-templated transcription"/>
    <property type="evidence" value="ECO:0007669"/>
    <property type="project" value="UniProtKB-UniRule"/>
</dbReference>
<dbReference type="GO" id="GO:0006508">
    <property type="term" value="P:proteolysis"/>
    <property type="evidence" value="ECO:0007669"/>
    <property type="project" value="InterPro"/>
</dbReference>
<dbReference type="GO" id="GO:0009432">
    <property type="term" value="P:SOS response"/>
    <property type="evidence" value="ECO:0007669"/>
    <property type="project" value="UniProtKB-UniRule"/>
</dbReference>
<dbReference type="CDD" id="cd06529">
    <property type="entry name" value="S24_LexA-like"/>
    <property type="match status" value="1"/>
</dbReference>
<dbReference type="FunFam" id="1.10.10.10:FF:000009">
    <property type="entry name" value="LexA repressor"/>
    <property type="match status" value="1"/>
</dbReference>
<dbReference type="FunFam" id="2.10.109.10:FF:000001">
    <property type="entry name" value="LexA repressor"/>
    <property type="match status" value="1"/>
</dbReference>
<dbReference type="Gene3D" id="2.10.109.10">
    <property type="entry name" value="Umud Fragment, subunit A"/>
    <property type="match status" value="1"/>
</dbReference>
<dbReference type="Gene3D" id="1.10.10.10">
    <property type="entry name" value="Winged helix-like DNA-binding domain superfamily/Winged helix DNA-binding domain"/>
    <property type="match status" value="1"/>
</dbReference>
<dbReference type="HAMAP" id="MF_00015">
    <property type="entry name" value="LexA"/>
    <property type="match status" value="1"/>
</dbReference>
<dbReference type="InterPro" id="IPR006200">
    <property type="entry name" value="LexA"/>
</dbReference>
<dbReference type="InterPro" id="IPR039418">
    <property type="entry name" value="LexA-like"/>
</dbReference>
<dbReference type="InterPro" id="IPR036286">
    <property type="entry name" value="LexA/Signal_pep-like_sf"/>
</dbReference>
<dbReference type="InterPro" id="IPR006199">
    <property type="entry name" value="LexA_DNA-bd_dom"/>
</dbReference>
<dbReference type="InterPro" id="IPR050077">
    <property type="entry name" value="LexA_repressor"/>
</dbReference>
<dbReference type="InterPro" id="IPR006197">
    <property type="entry name" value="Peptidase_S24_LexA"/>
</dbReference>
<dbReference type="InterPro" id="IPR015927">
    <property type="entry name" value="Peptidase_S24_S26A/B/C"/>
</dbReference>
<dbReference type="InterPro" id="IPR036388">
    <property type="entry name" value="WH-like_DNA-bd_sf"/>
</dbReference>
<dbReference type="InterPro" id="IPR036390">
    <property type="entry name" value="WH_DNA-bd_sf"/>
</dbReference>
<dbReference type="NCBIfam" id="TIGR00498">
    <property type="entry name" value="lexA"/>
    <property type="match status" value="1"/>
</dbReference>
<dbReference type="PANTHER" id="PTHR33516">
    <property type="entry name" value="LEXA REPRESSOR"/>
    <property type="match status" value="1"/>
</dbReference>
<dbReference type="PANTHER" id="PTHR33516:SF2">
    <property type="entry name" value="LEXA REPRESSOR-RELATED"/>
    <property type="match status" value="1"/>
</dbReference>
<dbReference type="Pfam" id="PF01726">
    <property type="entry name" value="LexA_DNA_bind"/>
    <property type="match status" value="1"/>
</dbReference>
<dbReference type="Pfam" id="PF00717">
    <property type="entry name" value="Peptidase_S24"/>
    <property type="match status" value="1"/>
</dbReference>
<dbReference type="PRINTS" id="PR00726">
    <property type="entry name" value="LEXASERPTASE"/>
</dbReference>
<dbReference type="SUPFAM" id="SSF51306">
    <property type="entry name" value="LexA/Signal peptidase"/>
    <property type="match status" value="1"/>
</dbReference>
<dbReference type="SUPFAM" id="SSF46785">
    <property type="entry name" value="Winged helix' DNA-binding domain"/>
    <property type="match status" value="1"/>
</dbReference>
<sequence>MKPLTPRQQQVFDLIKSKIEVTGMPPTRAEIARELGFRSANAAEEHLKALARKQVIEIVPGASRGIRILLEEEAANDEPGLPLIGRVAAGEPILAQEHVEMHYQVDPSMFRPQADFLLRVHGESMKDIGIMDGDLLAVHKTQDVRNGQVVVARVEDDVTVKRLERKGSTVLLHAENEEFAPIEVDLTSQQLTIEGIAVGIIRNTDWM</sequence>
<keyword id="KW-0068">Autocatalytic cleavage</keyword>
<keyword id="KW-0227">DNA damage</keyword>
<keyword id="KW-0234">DNA repair</keyword>
<keyword id="KW-0235">DNA replication</keyword>
<keyword id="KW-0238">DNA-binding</keyword>
<keyword id="KW-0378">Hydrolase</keyword>
<keyword id="KW-0678">Repressor</keyword>
<keyword id="KW-0742">SOS response</keyword>
<keyword id="KW-0804">Transcription</keyword>
<keyword id="KW-0805">Transcription regulation</keyword>
<name>LEXA_VIBVU</name>
<feature type="chain" id="PRO_0000170103" description="LexA repressor">
    <location>
        <begin position="1"/>
        <end position="207"/>
    </location>
</feature>
<feature type="DNA-binding region" description="H-T-H motif" evidence="1">
    <location>
        <begin position="28"/>
        <end position="48"/>
    </location>
</feature>
<feature type="active site" description="For autocatalytic cleavage activity" evidence="1">
    <location>
        <position position="124"/>
    </location>
</feature>
<feature type="active site" description="For autocatalytic cleavage activity" evidence="1">
    <location>
        <position position="161"/>
    </location>
</feature>
<feature type="site" description="Cleavage; by autolysis" evidence="1">
    <location>
        <begin position="89"/>
        <end position="90"/>
    </location>
</feature>
<protein>
    <recommendedName>
        <fullName evidence="1">LexA repressor</fullName>
        <ecNumber evidence="1">3.4.21.88</ecNumber>
    </recommendedName>
</protein>
<gene>
    <name evidence="1" type="primary">lexA</name>
    <name type="ordered locus">VV1_1166</name>
</gene>
<reference key="1">
    <citation type="submission" date="2002-12" db="EMBL/GenBank/DDBJ databases">
        <title>Complete genome sequence of Vibrio vulnificus CMCP6.</title>
        <authorList>
            <person name="Rhee J.H."/>
            <person name="Kim S.Y."/>
            <person name="Chung S.S."/>
            <person name="Kim J.J."/>
            <person name="Moon Y.H."/>
            <person name="Jeong H."/>
            <person name="Choy H.E."/>
        </authorList>
    </citation>
    <scope>NUCLEOTIDE SEQUENCE [LARGE SCALE GENOMIC DNA]</scope>
    <source>
        <strain>CMCP6</strain>
    </source>
</reference>
<comment type="function">
    <text evidence="1">Represses a number of genes involved in the response to DNA damage (SOS response), including recA and lexA. In the presence of single-stranded DNA, RecA interacts with LexA causing an autocatalytic cleavage which disrupts the DNA-binding part of LexA, leading to derepression of the SOS regulon and eventually DNA repair.</text>
</comment>
<comment type="catalytic activity">
    <reaction evidence="1">
        <text>Hydrolysis of Ala-|-Gly bond in repressor LexA.</text>
        <dbReference type="EC" id="3.4.21.88"/>
    </reaction>
</comment>
<comment type="subunit">
    <text evidence="1">Homodimer.</text>
</comment>
<comment type="similarity">
    <text evidence="1">Belongs to the peptidase S24 family.</text>
</comment>
<evidence type="ECO:0000255" key="1">
    <source>
        <dbReference type="HAMAP-Rule" id="MF_00015"/>
    </source>
</evidence>
<accession>Q8DD47</accession>
<organism>
    <name type="scientific">Vibrio vulnificus (strain CMCP6)</name>
    <dbReference type="NCBI Taxonomy" id="216895"/>
    <lineage>
        <taxon>Bacteria</taxon>
        <taxon>Pseudomonadati</taxon>
        <taxon>Pseudomonadota</taxon>
        <taxon>Gammaproteobacteria</taxon>
        <taxon>Vibrionales</taxon>
        <taxon>Vibrionaceae</taxon>
        <taxon>Vibrio</taxon>
    </lineage>
</organism>
<proteinExistence type="inferred from homology"/>